<protein>
    <recommendedName>
        <fullName evidence="1">Flagellar assembly factor FliW 1</fullName>
    </recommendedName>
</protein>
<feature type="chain" id="PRO_0000272997" description="Flagellar assembly factor FliW 1">
    <location>
        <begin position="1"/>
        <end position="135"/>
    </location>
</feature>
<reference key="1">
    <citation type="journal article" date="1999" name="Nature">
        <title>Genomic sequence comparison of two unrelated isolates of the human gastric pathogen Helicobacter pylori.</title>
        <authorList>
            <person name="Alm R.A."/>
            <person name="Ling L.-S.L."/>
            <person name="Moir D.T."/>
            <person name="King B.L."/>
            <person name="Brown E.D."/>
            <person name="Doig P.C."/>
            <person name="Smith D.R."/>
            <person name="Noonan B."/>
            <person name="Guild B.C."/>
            <person name="deJonge B.L."/>
            <person name="Carmel G."/>
            <person name="Tummino P.J."/>
            <person name="Caruso A."/>
            <person name="Uria-Nickelsen M."/>
            <person name="Mills D.M."/>
            <person name="Ives C."/>
            <person name="Gibson R."/>
            <person name="Merberg D."/>
            <person name="Mills S.D."/>
            <person name="Jiang Q."/>
            <person name="Taylor D.E."/>
            <person name="Vovis G.F."/>
            <person name="Trust T.J."/>
        </authorList>
    </citation>
    <scope>NUCLEOTIDE SEQUENCE [LARGE SCALE GENOMIC DNA]</scope>
    <source>
        <strain>J99 / ATCC 700824</strain>
    </source>
</reference>
<comment type="function">
    <text evidence="1">Acts as an anti-CsrA protein, binds CsrA and prevents it from repressing translation of its target genes, one of which is flagellin. Binds to flagellin and participates in the assembly of the flagellum.</text>
</comment>
<comment type="subunit">
    <text evidence="1">Interacts with translational regulator CsrA and flagellin(s).</text>
</comment>
<comment type="subcellular location">
    <subcellularLocation>
        <location evidence="1">Cytoplasm</location>
    </subcellularLocation>
</comment>
<comment type="similarity">
    <text evidence="1">Belongs to the FliW family.</text>
</comment>
<evidence type="ECO:0000255" key="1">
    <source>
        <dbReference type="HAMAP-Rule" id="MF_01185"/>
    </source>
</evidence>
<dbReference type="EMBL" id="AE001439">
    <property type="protein sequence ID" value="AAD06651.1"/>
    <property type="molecule type" value="Genomic_DNA"/>
</dbReference>
<dbReference type="PIR" id="F71852">
    <property type="entry name" value="F71852"/>
</dbReference>
<dbReference type="SMR" id="Q9ZK60"/>
<dbReference type="KEGG" id="hpj:jhp_1081"/>
<dbReference type="PATRIC" id="fig|85963.30.peg.1501"/>
<dbReference type="eggNOG" id="COG1699">
    <property type="taxonomic scope" value="Bacteria"/>
</dbReference>
<dbReference type="Proteomes" id="UP000000804">
    <property type="component" value="Chromosome"/>
</dbReference>
<dbReference type="GO" id="GO:0005737">
    <property type="term" value="C:cytoplasm"/>
    <property type="evidence" value="ECO:0007669"/>
    <property type="project" value="UniProtKB-SubCell"/>
</dbReference>
<dbReference type="GO" id="GO:0044780">
    <property type="term" value="P:bacterial-type flagellum assembly"/>
    <property type="evidence" value="ECO:0007669"/>
    <property type="project" value="UniProtKB-UniRule"/>
</dbReference>
<dbReference type="GO" id="GO:0006417">
    <property type="term" value="P:regulation of translation"/>
    <property type="evidence" value="ECO:0007669"/>
    <property type="project" value="UniProtKB-KW"/>
</dbReference>
<dbReference type="Gene3D" id="2.30.290.10">
    <property type="entry name" value="BH3618-like"/>
    <property type="match status" value="1"/>
</dbReference>
<dbReference type="HAMAP" id="MF_01185">
    <property type="entry name" value="FliW"/>
    <property type="match status" value="1"/>
</dbReference>
<dbReference type="InterPro" id="IPR003775">
    <property type="entry name" value="Flagellar_assembly_factor_FliW"/>
</dbReference>
<dbReference type="InterPro" id="IPR024046">
    <property type="entry name" value="Flagellar_assmbl_FliW_dom_sf"/>
</dbReference>
<dbReference type="NCBIfam" id="NF009791">
    <property type="entry name" value="PRK13283.1"/>
    <property type="match status" value="1"/>
</dbReference>
<dbReference type="PANTHER" id="PTHR39190">
    <property type="entry name" value="FLAGELLAR ASSEMBLY FACTOR FLIW"/>
    <property type="match status" value="1"/>
</dbReference>
<dbReference type="PANTHER" id="PTHR39190:SF1">
    <property type="entry name" value="FLAGELLAR ASSEMBLY FACTOR FLIW"/>
    <property type="match status" value="1"/>
</dbReference>
<dbReference type="Pfam" id="PF02623">
    <property type="entry name" value="FliW"/>
    <property type="match status" value="1"/>
</dbReference>
<dbReference type="SUPFAM" id="SSF141457">
    <property type="entry name" value="BH3618-like"/>
    <property type="match status" value="1"/>
</dbReference>
<organism>
    <name type="scientific">Helicobacter pylori (strain J99 / ATCC 700824)</name>
    <name type="common">Campylobacter pylori J99</name>
    <dbReference type="NCBI Taxonomy" id="85963"/>
    <lineage>
        <taxon>Bacteria</taxon>
        <taxon>Pseudomonadati</taxon>
        <taxon>Campylobacterota</taxon>
        <taxon>Epsilonproteobacteria</taxon>
        <taxon>Campylobacterales</taxon>
        <taxon>Helicobacteraceae</taxon>
        <taxon>Helicobacter</taxon>
    </lineage>
</organism>
<keyword id="KW-1005">Bacterial flagellum biogenesis</keyword>
<keyword id="KW-0143">Chaperone</keyword>
<keyword id="KW-0963">Cytoplasm</keyword>
<keyword id="KW-0810">Translation regulation</keyword>
<accession>Q9ZK60</accession>
<gene>
    <name evidence="1" type="primary">fliW1</name>
    <name type="ordered locus">jhp_1081</name>
</gene>
<proteinExistence type="inferred from homology"/>
<sequence>MNYFLKAPILGFEHINEVRLEKIDSLFSRLMGQTNSPMALDMVLVNPYCLREYSFVIPKYIELLLELDSHSKVEVYCVVVLQKNLEDSMVNFLAPLVFNSKNGFGAQVALSMMDYPDFGFRDPLKSFVVKERERA</sequence>
<name>FLIW1_HELPJ</name>